<proteinExistence type="inferred from homology"/>
<evidence type="ECO:0000250" key="1"/>
<evidence type="ECO:0000255" key="2"/>
<evidence type="ECO:0000305" key="3"/>
<protein>
    <recommendedName>
        <fullName>Putative antiporter subunit mnhF2</fullName>
    </recommendedName>
    <alternativeName>
        <fullName>Mrp complex subunit F2</fullName>
    </alternativeName>
    <alternativeName>
        <fullName>Putative NADH-ubiquinone oxidoreductase subunit mnhF2</fullName>
    </alternativeName>
</protein>
<accession>A6QET8</accession>
<reference key="1">
    <citation type="journal article" date="2008" name="J. Bacteriol.">
        <title>Genome sequence of Staphylococcus aureus strain Newman and comparative analysis of staphylococcal genomes: polymorphism and evolution of two major pathogenicity islands.</title>
        <authorList>
            <person name="Baba T."/>
            <person name="Bae T."/>
            <person name="Schneewind O."/>
            <person name="Takeuchi F."/>
            <person name="Hiramatsu K."/>
        </authorList>
    </citation>
    <scope>NUCLEOTIDE SEQUENCE [LARGE SCALE GENOMIC DNA]</scope>
    <source>
        <strain>Newman</strain>
    </source>
</reference>
<feature type="chain" id="PRO_0000372202" description="Putative antiporter subunit mnhF2">
    <location>
        <begin position="1"/>
        <end position="100"/>
    </location>
</feature>
<feature type="transmembrane region" description="Helical" evidence="2">
    <location>
        <begin position="5"/>
        <end position="25"/>
    </location>
</feature>
<feature type="transmembrane region" description="Helical" evidence="2">
    <location>
        <begin position="38"/>
        <end position="60"/>
    </location>
</feature>
<feature type="transmembrane region" description="Helical" evidence="2">
    <location>
        <begin position="70"/>
        <end position="92"/>
    </location>
</feature>
<keyword id="KW-0050">Antiport</keyword>
<keyword id="KW-1003">Cell membrane</keyword>
<keyword id="KW-0406">Ion transport</keyword>
<keyword id="KW-0472">Membrane</keyword>
<keyword id="KW-0812">Transmembrane</keyword>
<keyword id="KW-1133">Transmembrane helix</keyword>
<keyword id="KW-0813">Transport</keyword>
<organism>
    <name type="scientific">Staphylococcus aureus (strain Newman)</name>
    <dbReference type="NCBI Taxonomy" id="426430"/>
    <lineage>
        <taxon>Bacteria</taxon>
        <taxon>Bacillati</taxon>
        <taxon>Bacillota</taxon>
        <taxon>Bacilli</taxon>
        <taxon>Bacillales</taxon>
        <taxon>Staphylococcaceae</taxon>
        <taxon>Staphylococcus</taxon>
    </lineage>
</organism>
<gene>
    <name type="primary">mnhF2</name>
    <name type="synonym">mrpF2</name>
    <name type="ordered locus">NWMN_0598</name>
</gene>
<comment type="subunit">
    <text evidence="1">May form a heterooligomeric complex that consists of seven subunits: mnhA2, mnhB2, mnhC2, mnhD2, mnhE2, mnhF2 and mnhG2.</text>
</comment>
<comment type="subcellular location">
    <subcellularLocation>
        <location evidence="3">Cell membrane</location>
        <topology evidence="3">Multi-pass membrane protein</topology>
    </subcellularLocation>
</comment>
<comment type="similarity">
    <text evidence="3">Belongs to the CPA3 antiporters (TC 2.A.63) subunit F family.</text>
</comment>
<name>MNHF2_STAAE</name>
<dbReference type="EMBL" id="AP009351">
    <property type="protein sequence ID" value="BAF66870.1"/>
    <property type="molecule type" value="Genomic_DNA"/>
</dbReference>
<dbReference type="RefSeq" id="WP_000616642.1">
    <property type="nucleotide sequence ID" value="NZ_JBBIAE010000002.1"/>
</dbReference>
<dbReference type="SMR" id="A6QET8"/>
<dbReference type="KEGG" id="sae:NWMN_0598"/>
<dbReference type="HOGENOM" id="CLU_125825_1_3_9"/>
<dbReference type="Proteomes" id="UP000006386">
    <property type="component" value="Chromosome"/>
</dbReference>
<dbReference type="GO" id="GO:0005886">
    <property type="term" value="C:plasma membrane"/>
    <property type="evidence" value="ECO:0007669"/>
    <property type="project" value="UniProtKB-SubCell"/>
</dbReference>
<dbReference type="GO" id="GO:0015385">
    <property type="term" value="F:sodium:proton antiporter activity"/>
    <property type="evidence" value="ECO:0007669"/>
    <property type="project" value="TreeGrafter"/>
</dbReference>
<dbReference type="InterPro" id="IPR007208">
    <property type="entry name" value="MrpF/PhaF-like"/>
</dbReference>
<dbReference type="NCBIfam" id="NF009300">
    <property type="entry name" value="PRK12657.1"/>
    <property type="match status" value="1"/>
</dbReference>
<dbReference type="PANTHER" id="PTHR34702">
    <property type="entry name" value="NA(+)/H(+) ANTIPORTER SUBUNIT F1"/>
    <property type="match status" value="1"/>
</dbReference>
<dbReference type="PANTHER" id="PTHR34702:SF1">
    <property type="entry name" value="NA(+)_H(+) ANTIPORTER SUBUNIT F"/>
    <property type="match status" value="1"/>
</dbReference>
<dbReference type="Pfam" id="PF04066">
    <property type="entry name" value="MrpF_PhaF"/>
    <property type="match status" value="1"/>
</dbReference>
<dbReference type="PIRSF" id="PIRSF028784">
    <property type="entry name" value="MrpF"/>
    <property type="match status" value="1"/>
</dbReference>
<sequence>MIQTITHIMIISSLIIFGIALIICLFRLIKGPTTADRVVTFDTTSAVVMSIVGVLSVLMGTVSFLDSIMLIAIISFVSSVSISRFIGGGHVFNGNNKRNL</sequence>